<proteinExistence type="inferred from homology"/>
<sequence>MHDKILILDFGSQVTQLIARRVREAHVYCEIHPNDVSDAFVREFAPKAVILSGSHASTYEDHQLRAPQAVWDLGVPVLGICYGMQTMAVQLGGKVEWSDHREFGYAEMRAHGHTRLLDGIDDFKTAEGHGMLKVWMSHGDKVAELPPGFTLMASTPSCPIAGMADEARGYYAVQFHPEVTHTVKGRQIIERFVLQIAGAKPDWIMKNHIEEAVAKIREQVGDEEVILGLSGGVDSSVAAALIHRAIGDQLTCVFVDHGLLRLNEGKMVLDMFEGRLHAKVVHVDASEQFLGHLAGVTDPEQKRKIIGREFVEVFQAEAQKLSKAKWLAQGTIYPDVVESGGTKTKKATTIKSHHNVGGLPETLGLKLLEPLRDLFKDEVRELGVALGLPPEMVYRHPFPGPGLGVRILGEVKREYAELLRRADAIFIEELRGTTATAQDAAAGLCGEADVGKSWYDLTSQAFAVFLPVKSVGVMGDGRTYDYVTSLRAVQTTDFMTAHWAHLPYALLGRASNRIINEVRGINRVVYDISGKPPATIEWE</sequence>
<keyword id="KW-0067">ATP-binding</keyword>
<keyword id="KW-0315">Glutamine amidotransferase</keyword>
<keyword id="KW-0332">GMP biosynthesis</keyword>
<keyword id="KW-0436">Ligase</keyword>
<keyword id="KW-0547">Nucleotide-binding</keyword>
<keyword id="KW-0658">Purine biosynthesis</keyword>
<name>GUAA_BURVG</name>
<dbReference type="EC" id="6.3.5.2" evidence="1"/>
<dbReference type="EMBL" id="CP000614">
    <property type="protein sequence ID" value="ABO54898.1"/>
    <property type="molecule type" value="Genomic_DNA"/>
</dbReference>
<dbReference type="SMR" id="A4JF45"/>
<dbReference type="MEROPS" id="C26.957"/>
<dbReference type="KEGG" id="bvi:Bcep1808_1895"/>
<dbReference type="eggNOG" id="COG0518">
    <property type="taxonomic scope" value="Bacteria"/>
</dbReference>
<dbReference type="eggNOG" id="COG0519">
    <property type="taxonomic scope" value="Bacteria"/>
</dbReference>
<dbReference type="HOGENOM" id="CLU_014340_0_5_4"/>
<dbReference type="UniPathway" id="UPA00189">
    <property type="reaction ID" value="UER00296"/>
</dbReference>
<dbReference type="Proteomes" id="UP000002287">
    <property type="component" value="Chromosome 1"/>
</dbReference>
<dbReference type="GO" id="GO:0005829">
    <property type="term" value="C:cytosol"/>
    <property type="evidence" value="ECO:0007669"/>
    <property type="project" value="TreeGrafter"/>
</dbReference>
<dbReference type="GO" id="GO:0005524">
    <property type="term" value="F:ATP binding"/>
    <property type="evidence" value="ECO:0007669"/>
    <property type="project" value="UniProtKB-UniRule"/>
</dbReference>
<dbReference type="GO" id="GO:0003921">
    <property type="term" value="F:GMP synthase activity"/>
    <property type="evidence" value="ECO:0007669"/>
    <property type="project" value="InterPro"/>
</dbReference>
<dbReference type="CDD" id="cd01742">
    <property type="entry name" value="GATase1_GMP_Synthase"/>
    <property type="match status" value="1"/>
</dbReference>
<dbReference type="CDD" id="cd01997">
    <property type="entry name" value="GMP_synthase_C"/>
    <property type="match status" value="1"/>
</dbReference>
<dbReference type="FunFam" id="3.30.300.10:FF:000002">
    <property type="entry name" value="GMP synthase [glutamine-hydrolyzing]"/>
    <property type="match status" value="1"/>
</dbReference>
<dbReference type="FunFam" id="3.40.50.620:FF:000001">
    <property type="entry name" value="GMP synthase [glutamine-hydrolyzing]"/>
    <property type="match status" value="1"/>
</dbReference>
<dbReference type="FunFam" id="3.40.50.880:FF:000001">
    <property type="entry name" value="GMP synthase [glutamine-hydrolyzing]"/>
    <property type="match status" value="1"/>
</dbReference>
<dbReference type="Gene3D" id="3.30.300.10">
    <property type="match status" value="1"/>
</dbReference>
<dbReference type="Gene3D" id="3.40.50.880">
    <property type="match status" value="1"/>
</dbReference>
<dbReference type="Gene3D" id="3.40.50.620">
    <property type="entry name" value="HUPs"/>
    <property type="match status" value="1"/>
</dbReference>
<dbReference type="HAMAP" id="MF_00344">
    <property type="entry name" value="GMP_synthase"/>
    <property type="match status" value="1"/>
</dbReference>
<dbReference type="InterPro" id="IPR029062">
    <property type="entry name" value="Class_I_gatase-like"/>
</dbReference>
<dbReference type="InterPro" id="IPR017926">
    <property type="entry name" value="GATASE"/>
</dbReference>
<dbReference type="InterPro" id="IPR001674">
    <property type="entry name" value="GMP_synth_C"/>
</dbReference>
<dbReference type="InterPro" id="IPR004739">
    <property type="entry name" value="GMP_synth_GATase"/>
</dbReference>
<dbReference type="InterPro" id="IPR022955">
    <property type="entry name" value="GMP_synthase"/>
</dbReference>
<dbReference type="InterPro" id="IPR025777">
    <property type="entry name" value="GMPS_ATP_PPase_dom"/>
</dbReference>
<dbReference type="InterPro" id="IPR022310">
    <property type="entry name" value="NAD/GMP_synthase"/>
</dbReference>
<dbReference type="InterPro" id="IPR014729">
    <property type="entry name" value="Rossmann-like_a/b/a_fold"/>
</dbReference>
<dbReference type="NCBIfam" id="TIGR00884">
    <property type="entry name" value="guaA_Cterm"/>
    <property type="match status" value="1"/>
</dbReference>
<dbReference type="NCBIfam" id="TIGR00888">
    <property type="entry name" value="guaA_Nterm"/>
    <property type="match status" value="1"/>
</dbReference>
<dbReference type="NCBIfam" id="NF000848">
    <property type="entry name" value="PRK00074.1"/>
    <property type="match status" value="1"/>
</dbReference>
<dbReference type="PANTHER" id="PTHR11922:SF2">
    <property type="entry name" value="GMP SYNTHASE [GLUTAMINE-HYDROLYZING]"/>
    <property type="match status" value="1"/>
</dbReference>
<dbReference type="PANTHER" id="PTHR11922">
    <property type="entry name" value="GMP SYNTHASE-RELATED"/>
    <property type="match status" value="1"/>
</dbReference>
<dbReference type="Pfam" id="PF00117">
    <property type="entry name" value="GATase"/>
    <property type="match status" value="1"/>
</dbReference>
<dbReference type="Pfam" id="PF00958">
    <property type="entry name" value="GMP_synt_C"/>
    <property type="match status" value="1"/>
</dbReference>
<dbReference type="Pfam" id="PF02540">
    <property type="entry name" value="NAD_synthase"/>
    <property type="match status" value="1"/>
</dbReference>
<dbReference type="SUPFAM" id="SSF52402">
    <property type="entry name" value="Adenine nucleotide alpha hydrolases-like"/>
    <property type="match status" value="1"/>
</dbReference>
<dbReference type="SUPFAM" id="SSF52317">
    <property type="entry name" value="Class I glutamine amidotransferase-like"/>
    <property type="match status" value="1"/>
</dbReference>
<dbReference type="SUPFAM" id="SSF54810">
    <property type="entry name" value="GMP synthetase C-terminal dimerisation domain"/>
    <property type="match status" value="1"/>
</dbReference>
<dbReference type="PROSITE" id="PS51273">
    <property type="entry name" value="GATASE_TYPE_1"/>
    <property type="match status" value="1"/>
</dbReference>
<dbReference type="PROSITE" id="PS51553">
    <property type="entry name" value="GMPS_ATP_PPASE"/>
    <property type="match status" value="1"/>
</dbReference>
<accession>A4JF45</accession>
<reference key="1">
    <citation type="submission" date="2007-03" db="EMBL/GenBank/DDBJ databases">
        <title>Complete sequence of chromosome 1 of Burkholderia vietnamiensis G4.</title>
        <authorList>
            <consortium name="US DOE Joint Genome Institute"/>
            <person name="Copeland A."/>
            <person name="Lucas S."/>
            <person name="Lapidus A."/>
            <person name="Barry K."/>
            <person name="Detter J.C."/>
            <person name="Glavina del Rio T."/>
            <person name="Hammon N."/>
            <person name="Israni S."/>
            <person name="Dalin E."/>
            <person name="Tice H."/>
            <person name="Pitluck S."/>
            <person name="Chain P."/>
            <person name="Malfatti S."/>
            <person name="Shin M."/>
            <person name="Vergez L."/>
            <person name="Schmutz J."/>
            <person name="Larimer F."/>
            <person name="Land M."/>
            <person name="Hauser L."/>
            <person name="Kyrpides N."/>
            <person name="Tiedje J."/>
            <person name="Richardson P."/>
        </authorList>
    </citation>
    <scope>NUCLEOTIDE SEQUENCE [LARGE SCALE GENOMIC DNA]</scope>
    <source>
        <strain>G4 / LMG 22486</strain>
    </source>
</reference>
<evidence type="ECO:0000255" key="1">
    <source>
        <dbReference type="HAMAP-Rule" id="MF_00344"/>
    </source>
</evidence>
<organism>
    <name type="scientific">Burkholderia vietnamiensis (strain G4 / LMG 22486)</name>
    <name type="common">Burkholderia cepacia (strain R1808)</name>
    <dbReference type="NCBI Taxonomy" id="269482"/>
    <lineage>
        <taxon>Bacteria</taxon>
        <taxon>Pseudomonadati</taxon>
        <taxon>Pseudomonadota</taxon>
        <taxon>Betaproteobacteria</taxon>
        <taxon>Burkholderiales</taxon>
        <taxon>Burkholderiaceae</taxon>
        <taxon>Burkholderia</taxon>
        <taxon>Burkholderia cepacia complex</taxon>
    </lineage>
</organism>
<gene>
    <name evidence="1" type="primary">guaA</name>
    <name type="ordered locus">Bcep1808_1895</name>
</gene>
<protein>
    <recommendedName>
        <fullName evidence="1">GMP synthase [glutamine-hydrolyzing]</fullName>
        <ecNumber evidence="1">6.3.5.2</ecNumber>
    </recommendedName>
    <alternativeName>
        <fullName evidence="1">GMP synthetase</fullName>
    </alternativeName>
    <alternativeName>
        <fullName evidence="1">Glutamine amidotransferase</fullName>
    </alternativeName>
</protein>
<comment type="function">
    <text evidence="1">Catalyzes the synthesis of GMP from XMP.</text>
</comment>
<comment type="catalytic activity">
    <reaction evidence="1">
        <text>XMP + L-glutamine + ATP + H2O = GMP + L-glutamate + AMP + diphosphate + 2 H(+)</text>
        <dbReference type="Rhea" id="RHEA:11680"/>
        <dbReference type="ChEBI" id="CHEBI:15377"/>
        <dbReference type="ChEBI" id="CHEBI:15378"/>
        <dbReference type="ChEBI" id="CHEBI:29985"/>
        <dbReference type="ChEBI" id="CHEBI:30616"/>
        <dbReference type="ChEBI" id="CHEBI:33019"/>
        <dbReference type="ChEBI" id="CHEBI:57464"/>
        <dbReference type="ChEBI" id="CHEBI:58115"/>
        <dbReference type="ChEBI" id="CHEBI:58359"/>
        <dbReference type="ChEBI" id="CHEBI:456215"/>
        <dbReference type="EC" id="6.3.5.2"/>
    </reaction>
</comment>
<comment type="pathway">
    <text evidence="1">Purine metabolism; GMP biosynthesis; GMP from XMP (L-Gln route): step 1/1.</text>
</comment>
<comment type="subunit">
    <text evidence="1">Homodimer.</text>
</comment>
<feature type="chain" id="PRO_1000120243" description="GMP synthase [glutamine-hydrolyzing]">
    <location>
        <begin position="1"/>
        <end position="539"/>
    </location>
</feature>
<feature type="domain" description="Glutamine amidotransferase type-1" evidence="1">
    <location>
        <begin position="4"/>
        <end position="202"/>
    </location>
</feature>
<feature type="domain" description="GMPS ATP-PPase" evidence="1">
    <location>
        <begin position="203"/>
        <end position="395"/>
    </location>
</feature>
<feature type="active site" description="Nucleophile" evidence="1">
    <location>
        <position position="81"/>
    </location>
</feature>
<feature type="active site" evidence="1">
    <location>
        <position position="176"/>
    </location>
</feature>
<feature type="active site" evidence="1">
    <location>
        <position position="178"/>
    </location>
</feature>
<feature type="binding site" evidence="1">
    <location>
        <begin position="230"/>
        <end position="236"/>
    </location>
    <ligand>
        <name>ATP</name>
        <dbReference type="ChEBI" id="CHEBI:30616"/>
    </ligand>
</feature>